<reference key="1">
    <citation type="journal article" date="2002" name="Nature">
        <title>The genome sequence of Schizosaccharomyces pombe.</title>
        <authorList>
            <person name="Wood V."/>
            <person name="Gwilliam R."/>
            <person name="Rajandream M.A."/>
            <person name="Lyne M.H."/>
            <person name="Lyne R."/>
            <person name="Stewart A."/>
            <person name="Sgouros J.G."/>
            <person name="Peat N."/>
            <person name="Hayles J."/>
            <person name="Baker S.G."/>
            <person name="Basham D."/>
            <person name="Bowman S."/>
            <person name="Brooks K."/>
            <person name="Brown D."/>
            <person name="Brown S."/>
            <person name="Chillingworth T."/>
            <person name="Churcher C.M."/>
            <person name="Collins M."/>
            <person name="Connor R."/>
            <person name="Cronin A."/>
            <person name="Davis P."/>
            <person name="Feltwell T."/>
            <person name="Fraser A."/>
            <person name="Gentles S."/>
            <person name="Goble A."/>
            <person name="Hamlin N."/>
            <person name="Harris D.E."/>
            <person name="Hidalgo J."/>
            <person name="Hodgson G."/>
            <person name="Holroyd S."/>
            <person name="Hornsby T."/>
            <person name="Howarth S."/>
            <person name="Huckle E.J."/>
            <person name="Hunt S."/>
            <person name="Jagels K."/>
            <person name="James K.D."/>
            <person name="Jones L."/>
            <person name="Jones M."/>
            <person name="Leather S."/>
            <person name="McDonald S."/>
            <person name="McLean J."/>
            <person name="Mooney P."/>
            <person name="Moule S."/>
            <person name="Mungall K.L."/>
            <person name="Murphy L.D."/>
            <person name="Niblett D."/>
            <person name="Odell C."/>
            <person name="Oliver K."/>
            <person name="O'Neil S."/>
            <person name="Pearson D."/>
            <person name="Quail M.A."/>
            <person name="Rabbinowitsch E."/>
            <person name="Rutherford K.M."/>
            <person name="Rutter S."/>
            <person name="Saunders D."/>
            <person name="Seeger K."/>
            <person name="Sharp S."/>
            <person name="Skelton J."/>
            <person name="Simmonds M.N."/>
            <person name="Squares R."/>
            <person name="Squares S."/>
            <person name="Stevens K."/>
            <person name="Taylor K."/>
            <person name="Taylor R.G."/>
            <person name="Tivey A."/>
            <person name="Walsh S.V."/>
            <person name="Warren T."/>
            <person name="Whitehead S."/>
            <person name="Woodward J.R."/>
            <person name="Volckaert G."/>
            <person name="Aert R."/>
            <person name="Robben J."/>
            <person name="Grymonprez B."/>
            <person name="Weltjens I."/>
            <person name="Vanstreels E."/>
            <person name="Rieger M."/>
            <person name="Schaefer M."/>
            <person name="Mueller-Auer S."/>
            <person name="Gabel C."/>
            <person name="Fuchs M."/>
            <person name="Duesterhoeft A."/>
            <person name="Fritzc C."/>
            <person name="Holzer E."/>
            <person name="Moestl D."/>
            <person name="Hilbert H."/>
            <person name="Borzym K."/>
            <person name="Langer I."/>
            <person name="Beck A."/>
            <person name="Lehrach H."/>
            <person name="Reinhardt R."/>
            <person name="Pohl T.M."/>
            <person name="Eger P."/>
            <person name="Zimmermann W."/>
            <person name="Wedler H."/>
            <person name="Wambutt R."/>
            <person name="Purnelle B."/>
            <person name="Goffeau A."/>
            <person name="Cadieu E."/>
            <person name="Dreano S."/>
            <person name="Gloux S."/>
            <person name="Lelaure V."/>
            <person name="Mottier S."/>
            <person name="Galibert F."/>
            <person name="Aves S.J."/>
            <person name="Xiang Z."/>
            <person name="Hunt C."/>
            <person name="Moore K."/>
            <person name="Hurst S.M."/>
            <person name="Lucas M."/>
            <person name="Rochet M."/>
            <person name="Gaillardin C."/>
            <person name="Tallada V.A."/>
            <person name="Garzon A."/>
            <person name="Thode G."/>
            <person name="Daga R.R."/>
            <person name="Cruzado L."/>
            <person name="Jimenez J."/>
            <person name="Sanchez M."/>
            <person name="del Rey F."/>
            <person name="Benito J."/>
            <person name="Dominguez A."/>
            <person name="Revuelta J.L."/>
            <person name="Moreno S."/>
            <person name="Armstrong J."/>
            <person name="Forsburg S.L."/>
            <person name="Cerutti L."/>
            <person name="Lowe T."/>
            <person name="McCombie W.R."/>
            <person name="Paulsen I."/>
            <person name="Potashkin J."/>
            <person name="Shpakovski G.V."/>
            <person name="Ussery D."/>
            <person name="Barrell B.G."/>
            <person name="Nurse P."/>
        </authorList>
    </citation>
    <scope>NUCLEOTIDE SEQUENCE [LARGE SCALE GENOMIC DNA]</scope>
    <source>
        <strain>972 / ATCC 24843</strain>
    </source>
</reference>
<reference key="2">
    <citation type="journal article" date="2006" name="Nat. Biotechnol.">
        <title>ORFeome cloning and global analysis of protein localization in the fission yeast Schizosaccharomyces pombe.</title>
        <authorList>
            <person name="Matsuyama A."/>
            <person name="Arai R."/>
            <person name="Yashiroda Y."/>
            <person name="Shirai A."/>
            <person name="Kamata A."/>
            <person name="Sekido S."/>
            <person name="Kobayashi Y."/>
            <person name="Hashimoto A."/>
            <person name="Hamamoto M."/>
            <person name="Hiraoka Y."/>
            <person name="Horinouchi S."/>
            <person name="Yoshida M."/>
        </authorList>
    </citation>
    <scope>SUBCELLULAR LOCATION [LARGE SCALE ANALYSIS]</scope>
</reference>
<keyword id="KW-0539">Nucleus</keyword>
<keyword id="KW-1185">Reference proteome</keyword>
<dbReference type="EMBL" id="CU329672">
    <property type="protein sequence ID" value="CAA20371.1"/>
    <property type="molecule type" value="Genomic_DNA"/>
</dbReference>
<dbReference type="PIR" id="T41542">
    <property type="entry name" value="T41542"/>
</dbReference>
<dbReference type="RefSeq" id="NP_588272.1">
    <property type="nucleotide sequence ID" value="NM_001023262.2"/>
</dbReference>
<dbReference type="SMR" id="O74517"/>
<dbReference type="BioGRID" id="275960">
    <property type="interactions" value="20"/>
</dbReference>
<dbReference type="FunCoup" id="O74517">
    <property type="interactions" value="12"/>
</dbReference>
<dbReference type="IntAct" id="O74517">
    <property type="interactions" value="12"/>
</dbReference>
<dbReference type="STRING" id="284812.O74517"/>
<dbReference type="iPTMnet" id="O74517"/>
<dbReference type="PaxDb" id="4896-SPCC663.11.1"/>
<dbReference type="EnsemblFungi" id="SPCC663.11.1">
    <property type="protein sequence ID" value="SPCC663.11.1:pep"/>
    <property type="gene ID" value="SPCC663.11"/>
</dbReference>
<dbReference type="PomBase" id="SPCC663.11">
    <property type="gene designation" value="saf1"/>
</dbReference>
<dbReference type="VEuPathDB" id="FungiDB:SPCC663.11"/>
<dbReference type="eggNOG" id="ENOG502S9RI">
    <property type="taxonomic scope" value="Eukaryota"/>
</dbReference>
<dbReference type="HOGENOM" id="CLU_994521_0_0_1"/>
<dbReference type="InParanoid" id="O74517"/>
<dbReference type="OMA" id="MPKERNF"/>
<dbReference type="PhylomeDB" id="O74517"/>
<dbReference type="PRO" id="PR:O74517"/>
<dbReference type="Proteomes" id="UP000002485">
    <property type="component" value="Chromosome III"/>
</dbReference>
<dbReference type="GO" id="GO:0005730">
    <property type="term" value="C:nucleolus"/>
    <property type="evidence" value="ECO:0007005"/>
    <property type="project" value="PomBase"/>
</dbReference>
<dbReference type="GO" id="GO:0005634">
    <property type="term" value="C:nucleus"/>
    <property type="evidence" value="ECO:0007005"/>
    <property type="project" value="PomBase"/>
</dbReference>
<dbReference type="GO" id="GO:0005684">
    <property type="term" value="C:U2-type spliceosomal complex"/>
    <property type="evidence" value="ECO:0000314"/>
    <property type="project" value="PomBase"/>
</dbReference>
<dbReference type="GO" id="GO:0045292">
    <property type="term" value="P:mRNA cis splicing, via spliceosome"/>
    <property type="evidence" value="ECO:0000315"/>
    <property type="project" value="PomBase"/>
</dbReference>
<dbReference type="InterPro" id="IPR019007">
    <property type="entry name" value="WW_dom-bd_prot_11"/>
</dbReference>
<dbReference type="Pfam" id="PF12622">
    <property type="entry name" value="NpwBP"/>
    <property type="match status" value="1"/>
</dbReference>
<dbReference type="Pfam" id="PF09429">
    <property type="entry name" value="Wbp11"/>
    <property type="match status" value="1"/>
</dbReference>
<organism>
    <name type="scientific">Schizosaccharomyces pombe (strain 972 / ATCC 24843)</name>
    <name type="common">Fission yeast</name>
    <dbReference type="NCBI Taxonomy" id="284812"/>
    <lineage>
        <taxon>Eukaryota</taxon>
        <taxon>Fungi</taxon>
        <taxon>Dikarya</taxon>
        <taxon>Ascomycota</taxon>
        <taxon>Taphrinomycotina</taxon>
        <taxon>Schizosaccharomycetes</taxon>
        <taxon>Schizosaccharomycetales</taxon>
        <taxon>Schizosaccharomycetaceae</taxon>
        <taxon>Schizosaccharomyces</taxon>
    </lineage>
</organism>
<gene>
    <name type="primary">saf1</name>
    <name type="ORF">SPCC663.11</name>
</gene>
<proteinExistence type="evidence at protein level"/>
<comment type="interaction">
    <interactant intactId="EBI-4421067">
        <id>O74517</id>
    </interactant>
    <interactant intactId="EBI-4408349">
        <id>Q09685</id>
        <label>dre4</label>
    </interactant>
    <organismsDiffer>false</organismsDiffer>
    <experiments>4</experiments>
</comment>
<comment type="interaction">
    <interactant intactId="EBI-4421067">
        <id>O74517</id>
    </interactant>
    <interactant intactId="EBI-590830">
        <id>O14011</id>
        <label>prp19</label>
    </interactant>
    <organismsDiffer>false</organismsDiffer>
    <experiments>3</experiments>
</comment>
<comment type="subcellular location">
    <subcellularLocation>
        <location evidence="2">Nucleus</location>
        <location evidence="2">Nucleolus</location>
    </subcellularLocation>
</comment>
<accession>O74517</accession>
<evidence type="ECO:0000256" key="1">
    <source>
        <dbReference type="SAM" id="MobiDB-lite"/>
    </source>
</evidence>
<evidence type="ECO:0000269" key="2">
    <source>
    </source>
</evidence>
<name>SAF1_SCHPO</name>
<feature type="chain" id="PRO_0000372375" description="Protein saf1">
    <location>
        <begin position="1"/>
        <end position="278"/>
    </location>
</feature>
<feature type="region of interest" description="Disordered" evidence="1">
    <location>
        <begin position="1"/>
        <end position="43"/>
    </location>
</feature>
<feature type="region of interest" description="Disordered" evidence="1">
    <location>
        <begin position="81"/>
        <end position="210"/>
    </location>
</feature>
<feature type="region of interest" description="Disordered" evidence="1">
    <location>
        <begin position="240"/>
        <end position="264"/>
    </location>
</feature>
<feature type="compositionally biased region" description="Basic and acidic residues" evidence="1">
    <location>
        <begin position="22"/>
        <end position="38"/>
    </location>
</feature>
<feature type="compositionally biased region" description="Basic and acidic residues" evidence="1">
    <location>
        <begin position="90"/>
        <end position="103"/>
    </location>
</feature>
<feature type="compositionally biased region" description="Basic residues" evidence="1">
    <location>
        <begin position="104"/>
        <end position="116"/>
    </location>
</feature>
<feature type="compositionally biased region" description="Basic residues" evidence="1">
    <location>
        <begin position="169"/>
        <end position="183"/>
    </location>
</feature>
<feature type="compositionally biased region" description="Polar residues" evidence="1">
    <location>
        <begin position="186"/>
        <end position="202"/>
    </location>
</feature>
<sequence>MLSKRGLNPVQAESRKKKKREQIKVREERAKRHEERLSHRNMSQMERQLSELTQLESSQALNAHDKQLLQNLQRDMAIMKKKNIHGHRVGRVESDKTKEAERQHKPRKPFIPKNPKRSIYYDPIFNPYGVPPPGMPYREKEELSSETDESVIDIPLPSEEYPFEDPKPREKKNKSFKPKHHKKQDINASSAQPKSTTTTEAAANTKDIEEETMIEYSAQPVVRDLRQEAAQFLPAAFQRQKLAKGQKIGQPDRDVSSQVQEDKDEEIDNFYKEIGGYL</sequence>
<protein>
    <recommendedName>
        <fullName>Protein saf1</fullName>
    </recommendedName>
</protein>